<name>RS20_GEOTN</name>
<gene>
    <name evidence="1" type="primary">rpsT</name>
    <name type="ordered locus">GTNG_2448</name>
</gene>
<protein>
    <recommendedName>
        <fullName evidence="1">Small ribosomal subunit protein bS20</fullName>
    </recommendedName>
    <alternativeName>
        <fullName evidence="3">30S ribosomal protein S20</fullName>
    </alternativeName>
</protein>
<sequence>MANIKSAIKRAKTSEKRRAHNASMKSAMRTAIKKFEALVELKDVEKAQEAFIIASKKLDKAASKGLIHKNAASRQKSRLAKKLNSIQAS</sequence>
<dbReference type="EMBL" id="CP000557">
    <property type="protein sequence ID" value="ABO67793.1"/>
    <property type="molecule type" value="Genomic_DNA"/>
</dbReference>
<dbReference type="RefSeq" id="WP_008879927.1">
    <property type="nucleotide sequence ID" value="NC_009328.1"/>
</dbReference>
<dbReference type="SMR" id="A4IR39"/>
<dbReference type="GeneID" id="87623404"/>
<dbReference type="KEGG" id="gtn:GTNG_2448"/>
<dbReference type="eggNOG" id="COG0268">
    <property type="taxonomic scope" value="Bacteria"/>
</dbReference>
<dbReference type="HOGENOM" id="CLU_160655_1_0_9"/>
<dbReference type="Proteomes" id="UP000001578">
    <property type="component" value="Chromosome"/>
</dbReference>
<dbReference type="GO" id="GO:0005829">
    <property type="term" value="C:cytosol"/>
    <property type="evidence" value="ECO:0007669"/>
    <property type="project" value="TreeGrafter"/>
</dbReference>
<dbReference type="GO" id="GO:0015935">
    <property type="term" value="C:small ribosomal subunit"/>
    <property type="evidence" value="ECO:0007669"/>
    <property type="project" value="TreeGrafter"/>
</dbReference>
<dbReference type="GO" id="GO:0070181">
    <property type="term" value="F:small ribosomal subunit rRNA binding"/>
    <property type="evidence" value="ECO:0007669"/>
    <property type="project" value="TreeGrafter"/>
</dbReference>
<dbReference type="GO" id="GO:0003735">
    <property type="term" value="F:structural constituent of ribosome"/>
    <property type="evidence" value="ECO:0007669"/>
    <property type="project" value="InterPro"/>
</dbReference>
<dbReference type="GO" id="GO:0006412">
    <property type="term" value="P:translation"/>
    <property type="evidence" value="ECO:0007669"/>
    <property type="project" value="UniProtKB-UniRule"/>
</dbReference>
<dbReference type="FunFam" id="1.20.58.110:FF:000001">
    <property type="entry name" value="30S ribosomal protein S20"/>
    <property type="match status" value="1"/>
</dbReference>
<dbReference type="Gene3D" id="1.20.58.110">
    <property type="entry name" value="Ribosomal protein S20"/>
    <property type="match status" value="1"/>
</dbReference>
<dbReference type="HAMAP" id="MF_00500">
    <property type="entry name" value="Ribosomal_bS20"/>
    <property type="match status" value="1"/>
</dbReference>
<dbReference type="InterPro" id="IPR002583">
    <property type="entry name" value="Ribosomal_bS20"/>
</dbReference>
<dbReference type="InterPro" id="IPR036510">
    <property type="entry name" value="Ribosomal_bS20_sf"/>
</dbReference>
<dbReference type="NCBIfam" id="TIGR00029">
    <property type="entry name" value="S20"/>
    <property type="match status" value="1"/>
</dbReference>
<dbReference type="PANTHER" id="PTHR33398">
    <property type="entry name" value="30S RIBOSOMAL PROTEIN S20"/>
    <property type="match status" value="1"/>
</dbReference>
<dbReference type="PANTHER" id="PTHR33398:SF1">
    <property type="entry name" value="SMALL RIBOSOMAL SUBUNIT PROTEIN BS20C"/>
    <property type="match status" value="1"/>
</dbReference>
<dbReference type="Pfam" id="PF01649">
    <property type="entry name" value="Ribosomal_S20p"/>
    <property type="match status" value="1"/>
</dbReference>
<dbReference type="SUPFAM" id="SSF46992">
    <property type="entry name" value="Ribosomal protein S20"/>
    <property type="match status" value="1"/>
</dbReference>
<evidence type="ECO:0000255" key="1">
    <source>
        <dbReference type="HAMAP-Rule" id="MF_00500"/>
    </source>
</evidence>
<evidence type="ECO:0000256" key="2">
    <source>
        <dbReference type="SAM" id="MobiDB-lite"/>
    </source>
</evidence>
<evidence type="ECO:0000305" key="3"/>
<reference key="1">
    <citation type="journal article" date="2007" name="Proc. Natl. Acad. Sci. U.S.A.">
        <title>Genome and proteome of long-chain alkane degrading Geobacillus thermodenitrificans NG80-2 isolated from a deep-subsurface oil reservoir.</title>
        <authorList>
            <person name="Feng L."/>
            <person name="Wang W."/>
            <person name="Cheng J."/>
            <person name="Ren Y."/>
            <person name="Zhao G."/>
            <person name="Gao C."/>
            <person name="Tang Y."/>
            <person name="Liu X."/>
            <person name="Han W."/>
            <person name="Peng X."/>
            <person name="Liu R."/>
            <person name="Wang L."/>
        </authorList>
    </citation>
    <scope>NUCLEOTIDE SEQUENCE [LARGE SCALE GENOMIC DNA]</scope>
    <source>
        <strain>NG80-2</strain>
    </source>
</reference>
<accession>A4IR39</accession>
<feature type="chain" id="PRO_1000014586" description="Small ribosomal subunit protein bS20">
    <location>
        <begin position="1"/>
        <end position="89"/>
    </location>
</feature>
<feature type="region of interest" description="Disordered" evidence="2">
    <location>
        <begin position="1"/>
        <end position="25"/>
    </location>
</feature>
<feature type="region of interest" description="Disordered" evidence="2">
    <location>
        <begin position="69"/>
        <end position="89"/>
    </location>
</feature>
<feature type="compositionally biased region" description="Basic residues" evidence="2">
    <location>
        <begin position="7"/>
        <end position="20"/>
    </location>
</feature>
<proteinExistence type="inferred from homology"/>
<keyword id="KW-0687">Ribonucleoprotein</keyword>
<keyword id="KW-0689">Ribosomal protein</keyword>
<keyword id="KW-0694">RNA-binding</keyword>
<keyword id="KW-0699">rRNA-binding</keyword>
<organism>
    <name type="scientific">Geobacillus thermodenitrificans (strain NG80-2)</name>
    <dbReference type="NCBI Taxonomy" id="420246"/>
    <lineage>
        <taxon>Bacteria</taxon>
        <taxon>Bacillati</taxon>
        <taxon>Bacillota</taxon>
        <taxon>Bacilli</taxon>
        <taxon>Bacillales</taxon>
        <taxon>Anoxybacillaceae</taxon>
        <taxon>Geobacillus</taxon>
    </lineage>
</organism>
<comment type="function">
    <text evidence="1">Binds directly to 16S ribosomal RNA.</text>
</comment>
<comment type="similarity">
    <text evidence="1">Belongs to the bacterial ribosomal protein bS20 family.</text>
</comment>